<gene>
    <name type="primary">Cfap20</name>
    <name type="synonym">Gtl3</name>
</gene>
<dbReference type="EMBL" id="Z54179">
    <property type="protein sequence ID" value="CAA90889.1"/>
    <property type="molecule type" value="mRNA"/>
</dbReference>
<dbReference type="EMBL" id="AK088713">
    <property type="protein sequence ID" value="BAC40521.1"/>
    <property type="molecule type" value="mRNA"/>
</dbReference>
<dbReference type="EMBL" id="AK172603">
    <property type="protein sequence ID" value="BAE43087.1"/>
    <property type="molecule type" value="mRNA"/>
</dbReference>
<dbReference type="EMBL" id="BC119023">
    <property type="protein sequence ID" value="AAI19024.1"/>
    <property type="molecule type" value="mRNA"/>
</dbReference>
<dbReference type="EMBL" id="BC119025">
    <property type="protein sequence ID" value="AAI19026.1"/>
    <property type="molecule type" value="mRNA"/>
</dbReference>
<dbReference type="CCDS" id="CCDS40445.1">
    <molecule id="Q8BTU1-1"/>
</dbReference>
<dbReference type="RefSeq" id="NP_032213.2">
    <molecule id="Q8BTU1-1"/>
    <property type="nucleotide sequence ID" value="NM_008187.2"/>
</dbReference>
<dbReference type="RefSeq" id="XP_036009656.1">
    <molecule id="Q8BTU1-1"/>
    <property type="nucleotide sequence ID" value="XM_036153763.1"/>
</dbReference>
<dbReference type="PDB" id="8I7O">
    <property type="method" value="EM"/>
    <property type="resolution" value="4.50 A"/>
    <property type="chains" value="XC/XD/XE=1-193"/>
</dbReference>
<dbReference type="PDB" id="8I7R">
    <property type="method" value="EM"/>
    <property type="resolution" value="6.50 A"/>
    <property type="chains" value="XA/XB/XC/XD/XE/XF/XG=1-193"/>
</dbReference>
<dbReference type="PDB" id="8IYJ">
    <property type="method" value="EM"/>
    <property type="resolution" value="3.50 A"/>
    <property type="chains" value="XA/XB/XC/XD/XE/XF/XG/XH=1-193"/>
</dbReference>
<dbReference type="PDB" id="8TO0">
    <property type="method" value="EM"/>
    <property type="resolution" value="7.70 A"/>
    <property type="chains" value="Fh/Fi/Fj/Fk/Fl/Fm/Fn=1-193"/>
</dbReference>
<dbReference type="PDBsum" id="8I7O"/>
<dbReference type="PDBsum" id="8I7R"/>
<dbReference type="PDBsum" id="8IYJ"/>
<dbReference type="PDBsum" id="8TO0"/>
<dbReference type="EMDB" id="EMD-35229"/>
<dbReference type="EMDB" id="EMD-35230"/>
<dbReference type="EMDB" id="EMD-35823"/>
<dbReference type="EMDB" id="EMD-41431"/>
<dbReference type="SMR" id="Q8BTU1"/>
<dbReference type="BioGRID" id="200114">
    <property type="interactions" value="1"/>
</dbReference>
<dbReference type="FunCoup" id="Q8BTU1">
    <property type="interactions" value="1689"/>
</dbReference>
<dbReference type="STRING" id="10090.ENSMUSP00000034249"/>
<dbReference type="iPTMnet" id="Q8BTU1"/>
<dbReference type="PhosphoSitePlus" id="Q8BTU1"/>
<dbReference type="SwissPalm" id="Q8BTU1"/>
<dbReference type="PaxDb" id="10090-ENSMUSP00000034249"/>
<dbReference type="PeptideAtlas" id="Q8BTU1"/>
<dbReference type="ProteomicsDB" id="281390">
    <molecule id="Q8BTU1-1"/>
</dbReference>
<dbReference type="ProteomicsDB" id="281391">
    <molecule id="Q8BTU1-2"/>
</dbReference>
<dbReference type="Pumba" id="Q8BTU1"/>
<dbReference type="Antibodypedia" id="15216">
    <property type="antibodies" value="115 antibodies from 23 providers"/>
</dbReference>
<dbReference type="DNASU" id="14894"/>
<dbReference type="Ensembl" id="ENSMUST00000034249.8">
    <molecule id="Q8BTU1-1"/>
    <property type="protein sequence ID" value="ENSMUSP00000034249.7"/>
    <property type="gene ID" value="ENSMUSG00000031796.8"/>
</dbReference>
<dbReference type="Ensembl" id="ENSMUST00000213086.2">
    <molecule id="Q8BTU1-2"/>
    <property type="protein sequence ID" value="ENSMUSP00000148651.2"/>
    <property type="gene ID" value="ENSMUSG00000031796.8"/>
</dbReference>
<dbReference type="GeneID" id="14894"/>
<dbReference type="KEGG" id="mmu:14894"/>
<dbReference type="UCSC" id="uc009myi.2">
    <molecule id="Q8BTU1-2"/>
    <property type="organism name" value="mouse"/>
</dbReference>
<dbReference type="UCSC" id="uc009myj.2">
    <molecule id="Q8BTU1-1"/>
    <property type="organism name" value="mouse"/>
</dbReference>
<dbReference type="AGR" id="MGI:107428"/>
<dbReference type="CTD" id="29105"/>
<dbReference type="MGI" id="MGI:107428">
    <property type="gene designation" value="Cfap20"/>
</dbReference>
<dbReference type="VEuPathDB" id="HostDB:ENSMUSG00000031796"/>
<dbReference type="eggNOG" id="KOG3213">
    <property type="taxonomic scope" value="Eukaryota"/>
</dbReference>
<dbReference type="GeneTree" id="ENSGT00390000004554"/>
<dbReference type="HOGENOM" id="CLU_060610_1_1_1"/>
<dbReference type="InParanoid" id="Q8BTU1"/>
<dbReference type="OMA" id="TTYISCP"/>
<dbReference type="OrthoDB" id="7486196at2759"/>
<dbReference type="PhylomeDB" id="Q8BTU1"/>
<dbReference type="TreeFam" id="TF313405"/>
<dbReference type="BioGRID-ORCS" id="14894">
    <property type="hits" value="28 hits in 77 CRISPR screens"/>
</dbReference>
<dbReference type="ChiTaRS" id="Cfap20">
    <property type="organism name" value="mouse"/>
</dbReference>
<dbReference type="PRO" id="PR:Q8BTU1"/>
<dbReference type="Proteomes" id="UP000000589">
    <property type="component" value="Chromosome 8"/>
</dbReference>
<dbReference type="RNAct" id="Q8BTU1">
    <property type="molecule type" value="protein"/>
</dbReference>
<dbReference type="Bgee" id="ENSMUSG00000031796">
    <property type="expression patterns" value="Expressed in olfactory epithelium and 273 other cell types or tissues"/>
</dbReference>
<dbReference type="ExpressionAtlas" id="Q8BTU1">
    <property type="expression patterns" value="baseline and differential"/>
</dbReference>
<dbReference type="GO" id="GO:0160112">
    <property type="term" value="C:axonemal B tubule inner sheath"/>
    <property type="evidence" value="ECO:0000314"/>
    <property type="project" value="UniProtKB"/>
</dbReference>
<dbReference type="GO" id="GO:0005879">
    <property type="term" value="C:axonemal microtubule"/>
    <property type="evidence" value="ECO:0000250"/>
    <property type="project" value="UniProtKB"/>
</dbReference>
<dbReference type="GO" id="GO:0005814">
    <property type="term" value="C:centriole"/>
    <property type="evidence" value="ECO:0000250"/>
    <property type="project" value="UniProtKB"/>
</dbReference>
<dbReference type="GO" id="GO:0036064">
    <property type="term" value="C:ciliary basal body"/>
    <property type="evidence" value="ECO:0000250"/>
    <property type="project" value="UniProtKB"/>
</dbReference>
<dbReference type="GO" id="GO:0005929">
    <property type="term" value="C:cilium"/>
    <property type="evidence" value="ECO:0000314"/>
    <property type="project" value="MGI"/>
</dbReference>
<dbReference type="GO" id="GO:0005654">
    <property type="term" value="C:nucleoplasm"/>
    <property type="evidence" value="ECO:0007669"/>
    <property type="project" value="Ensembl"/>
</dbReference>
<dbReference type="GO" id="GO:0036126">
    <property type="term" value="C:sperm flagellum"/>
    <property type="evidence" value="ECO:0000314"/>
    <property type="project" value="UniProtKB"/>
</dbReference>
<dbReference type="GO" id="GO:0060271">
    <property type="term" value="P:cilium assembly"/>
    <property type="evidence" value="ECO:0000250"/>
    <property type="project" value="UniProtKB"/>
</dbReference>
<dbReference type="GO" id="GO:0030317">
    <property type="term" value="P:flagellated sperm motility"/>
    <property type="evidence" value="ECO:0000314"/>
    <property type="project" value="UniProtKB"/>
</dbReference>
<dbReference type="GO" id="GO:2000147">
    <property type="term" value="P:positive regulation of cell motility"/>
    <property type="evidence" value="ECO:0000250"/>
    <property type="project" value="UniProtKB"/>
</dbReference>
<dbReference type="GO" id="GO:2000253">
    <property type="term" value="P:positive regulation of feeding behavior"/>
    <property type="evidence" value="ECO:0000250"/>
    <property type="project" value="UniProtKB"/>
</dbReference>
<dbReference type="GO" id="GO:0018095">
    <property type="term" value="P:protein polyglutamylation"/>
    <property type="evidence" value="ECO:0000250"/>
    <property type="project" value="UniProtKB"/>
</dbReference>
<dbReference type="GO" id="GO:0060296">
    <property type="term" value="P:regulation of cilium beat frequency involved in ciliary motility"/>
    <property type="evidence" value="ECO:0000250"/>
    <property type="project" value="UniProtKB"/>
</dbReference>
<dbReference type="InterPro" id="IPR040441">
    <property type="entry name" value="CFA20/CFAP20DC"/>
</dbReference>
<dbReference type="InterPro" id="IPR007714">
    <property type="entry name" value="CFA20_dom"/>
</dbReference>
<dbReference type="PANTHER" id="PTHR12458">
    <property type="entry name" value="ORF PROTEIN"/>
    <property type="match status" value="1"/>
</dbReference>
<dbReference type="Pfam" id="PF05018">
    <property type="entry name" value="CFA20_dom"/>
    <property type="match status" value="1"/>
</dbReference>
<protein>
    <recommendedName>
        <fullName>Cilia- and flagella-associated protein 20</fullName>
    </recommendedName>
    <alternativeName>
        <fullName>Gene trap locus 3 protein</fullName>
    </alternativeName>
</protein>
<comment type="function">
    <text evidence="2 4 5 6">Cilium- and flagellum-specific protein that plays a role in axonemal structure organization and motility (PubMed:37295417, PubMed:37865089, PubMed:37989994). Microtubule inner protein (MIP) part of the dynein-decorated doublet microtubules (DMTs) in cilia axoneme, which is required for motile cilia beating (PubMed:37295417). Involved in the regulation of the size and morphology of cilia (By similarity). Required for axonemal microtubules polyglutamylation (By similarity).</text>
</comment>
<comment type="subunit">
    <text evidence="4 5 6">Microtubule inner protein component of sperm flagellar doublet microtubules.</text>
</comment>
<comment type="subcellular location">
    <subcellularLocation>
        <location evidence="2">Nucleus</location>
    </subcellularLocation>
    <subcellularLocation>
        <location evidence="2">Cytoplasm</location>
        <location evidence="2">Cytoskeleton</location>
        <location evidence="2">Microtubule organizing center</location>
        <location evidence="2">Centrosome</location>
        <location evidence="2">Centriole</location>
    </subcellularLocation>
    <subcellularLocation>
        <location evidence="2">Cytoplasm</location>
        <location evidence="2">Cytoskeleton</location>
        <location evidence="2">Cilium basal body</location>
    </subcellularLocation>
    <subcellularLocation>
        <location evidence="1">Cytoplasm</location>
        <location evidence="1">Cytoskeleton</location>
        <location evidence="1">Cilium axoneme</location>
    </subcellularLocation>
    <subcellularLocation>
        <location evidence="4 5 6">Cytoplasm</location>
        <location evidence="4 5 6">Cytoskeleton</location>
        <location evidence="4 5 6">Flagellum axoneme</location>
    </subcellularLocation>
    <text evidence="4">Microtubule inner protein (MIP) part of the dynein-decorated doublet microtubules (DMTs) in cilia axoneme.</text>
</comment>
<comment type="alternative products">
    <event type="alternative splicing"/>
    <isoform>
        <id>Q8BTU1-1</id>
        <name>1</name>
        <sequence type="displayed"/>
    </isoform>
    <isoform>
        <id>Q8BTU1-2</id>
        <name>2</name>
        <sequence type="described" ref="VSP_027219"/>
    </isoform>
</comment>
<comment type="tissue specificity">
    <text evidence="7">Widely expressed, with highest levels in testis and lowest in muscle.</text>
</comment>
<comment type="developmental stage">
    <text evidence="3 7">Expressed at high levels in germinal vesicle stage oocytes at the mRNA level. Expression progressively decreases until blastocyst stage (PubMed:15803458). Detected in later embryonic stages from 9.5 to 19.5 dpc. At 11.5 dpc, the expression is widespread, with no preference for any particular organ or structure (PubMed:8688464).</text>
</comment>
<comment type="similarity">
    <text evidence="9">Belongs to the CFAP20 family.</text>
</comment>
<proteinExistence type="evidence at protein level"/>
<organism>
    <name type="scientific">Mus musculus</name>
    <name type="common">Mouse</name>
    <dbReference type="NCBI Taxonomy" id="10090"/>
    <lineage>
        <taxon>Eukaryota</taxon>
        <taxon>Metazoa</taxon>
        <taxon>Chordata</taxon>
        <taxon>Craniata</taxon>
        <taxon>Vertebrata</taxon>
        <taxon>Euteleostomi</taxon>
        <taxon>Mammalia</taxon>
        <taxon>Eutheria</taxon>
        <taxon>Euarchontoglires</taxon>
        <taxon>Glires</taxon>
        <taxon>Rodentia</taxon>
        <taxon>Myomorpha</taxon>
        <taxon>Muroidea</taxon>
        <taxon>Muridae</taxon>
        <taxon>Murinae</taxon>
        <taxon>Mus</taxon>
        <taxon>Mus</taxon>
    </lineage>
</organism>
<feature type="chain" id="PRO_0000296399" description="Cilia- and flagella-associated protein 20">
    <location>
        <begin position="1"/>
        <end position="193"/>
    </location>
</feature>
<feature type="splice variant" id="VSP_027219" description="In isoform 2." evidence="8">
    <original>IHANCRIRRVYFSDRLYSEDELPAEFKLYLPVQNKAKQ</original>
    <variation>VLHLPHRESHTGGFRTLWLANWLAYGPWSRTM</variation>
    <location>
        <begin position="156"/>
        <end position="193"/>
    </location>
</feature>
<feature type="sequence conflict" description="In Ref. 1; CAA90889." evidence="9" ref="1">
    <original>K</original>
    <variation>I</variation>
    <location>
        <position position="72"/>
    </location>
</feature>
<accession>Q8BTU1</accession>
<accession>P70212</accession>
<accession>Q3T9D6</accession>
<reference key="1">
    <citation type="journal article" date="1996" name="Biochim. Biophys. Acta">
        <title>Sequence and expression pattern of an evolutionarily conserved transcript identified by gene trapping.</title>
        <authorList>
            <person name="Ruether U."/>
            <person name="Rijkers T."/>
        </authorList>
    </citation>
    <scope>NUCLEOTIDE SEQUENCE [MRNA] (ISOFORM 1)</scope>
    <scope>TISSUE SPECIFICITY</scope>
    <scope>DEVELOPMENTAL STAGE</scope>
    <source>
        <strain>BALB/cJ</strain>
        <tissue>Testis</tissue>
    </source>
</reference>
<reference key="2">
    <citation type="journal article" date="2005" name="Science">
        <title>The transcriptional landscape of the mammalian genome.</title>
        <authorList>
            <person name="Carninci P."/>
            <person name="Kasukawa T."/>
            <person name="Katayama S."/>
            <person name="Gough J."/>
            <person name="Frith M.C."/>
            <person name="Maeda N."/>
            <person name="Oyama R."/>
            <person name="Ravasi T."/>
            <person name="Lenhard B."/>
            <person name="Wells C."/>
            <person name="Kodzius R."/>
            <person name="Shimokawa K."/>
            <person name="Bajic V.B."/>
            <person name="Brenner S.E."/>
            <person name="Batalov S."/>
            <person name="Forrest A.R."/>
            <person name="Zavolan M."/>
            <person name="Davis M.J."/>
            <person name="Wilming L.G."/>
            <person name="Aidinis V."/>
            <person name="Allen J.E."/>
            <person name="Ambesi-Impiombato A."/>
            <person name="Apweiler R."/>
            <person name="Aturaliya R.N."/>
            <person name="Bailey T.L."/>
            <person name="Bansal M."/>
            <person name="Baxter L."/>
            <person name="Beisel K.W."/>
            <person name="Bersano T."/>
            <person name="Bono H."/>
            <person name="Chalk A.M."/>
            <person name="Chiu K.P."/>
            <person name="Choudhary V."/>
            <person name="Christoffels A."/>
            <person name="Clutterbuck D.R."/>
            <person name="Crowe M.L."/>
            <person name="Dalla E."/>
            <person name="Dalrymple B.P."/>
            <person name="de Bono B."/>
            <person name="Della Gatta G."/>
            <person name="di Bernardo D."/>
            <person name="Down T."/>
            <person name="Engstrom P."/>
            <person name="Fagiolini M."/>
            <person name="Faulkner G."/>
            <person name="Fletcher C.F."/>
            <person name="Fukushima T."/>
            <person name="Furuno M."/>
            <person name="Futaki S."/>
            <person name="Gariboldi M."/>
            <person name="Georgii-Hemming P."/>
            <person name="Gingeras T.R."/>
            <person name="Gojobori T."/>
            <person name="Green R.E."/>
            <person name="Gustincich S."/>
            <person name="Harbers M."/>
            <person name="Hayashi Y."/>
            <person name="Hensch T.K."/>
            <person name="Hirokawa N."/>
            <person name="Hill D."/>
            <person name="Huminiecki L."/>
            <person name="Iacono M."/>
            <person name="Ikeo K."/>
            <person name="Iwama A."/>
            <person name="Ishikawa T."/>
            <person name="Jakt M."/>
            <person name="Kanapin A."/>
            <person name="Katoh M."/>
            <person name="Kawasawa Y."/>
            <person name="Kelso J."/>
            <person name="Kitamura H."/>
            <person name="Kitano H."/>
            <person name="Kollias G."/>
            <person name="Krishnan S.P."/>
            <person name="Kruger A."/>
            <person name="Kummerfeld S.K."/>
            <person name="Kurochkin I.V."/>
            <person name="Lareau L.F."/>
            <person name="Lazarevic D."/>
            <person name="Lipovich L."/>
            <person name="Liu J."/>
            <person name="Liuni S."/>
            <person name="McWilliam S."/>
            <person name="Madan Babu M."/>
            <person name="Madera M."/>
            <person name="Marchionni L."/>
            <person name="Matsuda H."/>
            <person name="Matsuzawa S."/>
            <person name="Miki H."/>
            <person name="Mignone F."/>
            <person name="Miyake S."/>
            <person name="Morris K."/>
            <person name="Mottagui-Tabar S."/>
            <person name="Mulder N."/>
            <person name="Nakano N."/>
            <person name="Nakauchi H."/>
            <person name="Ng P."/>
            <person name="Nilsson R."/>
            <person name="Nishiguchi S."/>
            <person name="Nishikawa S."/>
            <person name="Nori F."/>
            <person name="Ohara O."/>
            <person name="Okazaki Y."/>
            <person name="Orlando V."/>
            <person name="Pang K.C."/>
            <person name="Pavan W.J."/>
            <person name="Pavesi G."/>
            <person name="Pesole G."/>
            <person name="Petrovsky N."/>
            <person name="Piazza S."/>
            <person name="Reed J."/>
            <person name="Reid J.F."/>
            <person name="Ring B.Z."/>
            <person name="Ringwald M."/>
            <person name="Rost B."/>
            <person name="Ruan Y."/>
            <person name="Salzberg S.L."/>
            <person name="Sandelin A."/>
            <person name="Schneider C."/>
            <person name="Schoenbach C."/>
            <person name="Sekiguchi K."/>
            <person name="Semple C.A."/>
            <person name="Seno S."/>
            <person name="Sessa L."/>
            <person name="Sheng Y."/>
            <person name="Shibata Y."/>
            <person name="Shimada H."/>
            <person name="Shimada K."/>
            <person name="Silva D."/>
            <person name="Sinclair B."/>
            <person name="Sperling S."/>
            <person name="Stupka E."/>
            <person name="Sugiura K."/>
            <person name="Sultana R."/>
            <person name="Takenaka Y."/>
            <person name="Taki K."/>
            <person name="Tammoja K."/>
            <person name="Tan S.L."/>
            <person name="Tang S."/>
            <person name="Taylor M.S."/>
            <person name="Tegner J."/>
            <person name="Teichmann S.A."/>
            <person name="Ueda H.R."/>
            <person name="van Nimwegen E."/>
            <person name="Verardo R."/>
            <person name="Wei C.L."/>
            <person name="Yagi K."/>
            <person name="Yamanishi H."/>
            <person name="Zabarovsky E."/>
            <person name="Zhu S."/>
            <person name="Zimmer A."/>
            <person name="Hide W."/>
            <person name="Bult C."/>
            <person name="Grimmond S.M."/>
            <person name="Teasdale R.D."/>
            <person name="Liu E.T."/>
            <person name="Brusic V."/>
            <person name="Quackenbush J."/>
            <person name="Wahlestedt C."/>
            <person name="Mattick J.S."/>
            <person name="Hume D.A."/>
            <person name="Kai C."/>
            <person name="Sasaki D."/>
            <person name="Tomaru Y."/>
            <person name="Fukuda S."/>
            <person name="Kanamori-Katayama M."/>
            <person name="Suzuki M."/>
            <person name="Aoki J."/>
            <person name="Arakawa T."/>
            <person name="Iida J."/>
            <person name="Imamura K."/>
            <person name="Itoh M."/>
            <person name="Kato T."/>
            <person name="Kawaji H."/>
            <person name="Kawagashira N."/>
            <person name="Kawashima T."/>
            <person name="Kojima M."/>
            <person name="Kondo S."/>
            <person name="Konno H."/>
            <person name="Nakano K."/>
            <person name="Ninomiya N."/>
            <person name="Nishio T."/>
            <person name="Okada M."/>
            <person name="Plessy C."/>
            <person name="Shibata K."/>
            <person name="Shiraki T."/>
            <person name="Suzuki S."/>
            <person name="Tagami M."/>
            <person name="Waki K."/>
            <person name="Watahiki A."/>
            <person name="Okamura-Oho Y."/>
            <person name="Suzuki H."/>
            <person name="Kawai J."/>
            <person name="Hayashizaki Y."/>
        </authorList>
    </citation>
    <scope>NUCLEOTIDE SEQUENCE [LARGE SCALE MRNA] (ISOFORMS 1 AND 2)</scope>
    <source>
        <strain>NOD</strain>
        <tissue>Thymus</tissue>
    </source>
</reference>
<reference key="3">
    <citation type="journal article" date="2004" name="Genome Res.">
        <title>The status, quality, and expansion of the NIH full-length cDNA project: the Mammalian Gene Collection (MGC).</title>
        <authorList>
            <consortium name="The MGC Project Team"/>
        </authorList>
    </citation>
    <scope>NUCLEOTIDE SEQUENCE [LARGE SCALE MRNA] (ISOFORM 1)</scope>
    <source>
        <tissue>Brain</tissue>
    </source>
</reference>
<reference key="4">
    <citation type="journal article" date="2005" name="Mol. Reprod. Dev.">
        <title>Specific maternal transcripts in bovine oocytes and cleavaged embryos: identification with novel DDRT-PCR methods.</title>
        <authorList>
            <person name="Hwang K.-C."/>
            <person name="Park S.-Y."/>
            <person name="Park S.-P."/>
            <person name="Lim J.H."/>
            <person name="Cui X.-S."/>
            <person name="Kim N.-H."/>
        </authorList>
    </citation>
    <scope>DEVELOPMENTAL STAGE</scope>
</reference>
<reference key="5">
    <citation type="journal article" date="2010" name="Cell">
        <title>A tissue-specific atlas of mouse protein phosphorylation and expression.</title>
        <authorList>
            <person name="Huttlin E.L."/>
            <person name="Jedrychowski M.P."/>
            <person name="Elias J.E."/>
            <person name="Goswami T."/>
            <person name="Rad R."/>
            <person name="Beausoleil S.A."/>
            <person name="Villen J."/>
            <person name="Haas W."/>
            <person name="Sowa M.E."/>
            <person name="Gygi S.P."/>
        </authorList>
    </citation>
    <scope>IDENTIFICATION BY MASS SPECTROMETRY [LARGE SCALE ANALYSIS]</scope>
    <source>
        <tissue>Brain</tissue>
        <tissue>Kidney</tissue>
        <tissue>Lung</tissue>
        <tissue>Spleen</tissue>
        <tissue>Testis</tissue>
    </source>
</reference>
<reference evidence="12" key="6">
    <citation type="journal article" date="2023" name="Cell">
        <title>Structures of sperm flagellar doublet microtubules expand the genetic spectrum of male infertility.</title>
        <authorList>
            <person name="Zhou L."/>
            <person name="Liu H."/>
            <person name="Liu S."/>
            <person name="Yang X."/>
            <person name="Dong Y."/>
            <person name="Pan Y."/>
            <person name="Xiao Z."/>
            <person name="Zheng B."/>
            <person name="Sun Y."/>
            <person name="Huang P."/>
            <person name="Zhang X."/>
            <person name="Hu J."/>
            <person name="Sun R."/>
            <person name="Feng S."/>
            <person name="Zhu Y."/>
            <person name="Liu M."/>
            <person name="Gui M."/>
            <person name="Wu J."/>
        </authorList>
    </citation>
    <scope>STRUCTURE BY ELECTRON MICROSCOPY (3.50 ANGSTROMS) OF SPERM FLAGELLAR DOUBLET MICROTUBULES</scope>
    <scope>FUNCTION</scope>
    <scope>SUBCELLULAR LOCATION</scope>
    <scope>SUBUNIT</scope>
</reference>
<reference evidence="13" key="7">
    <citation type="journal article" date="2023" name="Cell">
        <title>De novo protein identification in mammalian sperm using in situ cryoelectron tomography and AlphaFold2 docking.</title>
        <authorList>
            <person name="Chen Z."/>
            <person name="Shiozaki M."/>
            <person name="Haas K.M."/>
            <person name="Skinner W.M."/>
            <person name="Zhao S."/>
            <person name="Guo C."/>
            <person name="Polacco B.J."/>
            <person name="Yu Z."/>
            <person name="Krogan N.J."/>
            <person name="Lishko P.V."/>
            <person name="Kaake R.M."/>
            <person name="Vale R.D."/>
            <person name="Agard D.A."/>
        </authorList>
    </citation>
    <scope>STRUCTURE BY ELECTRON MICROSCOPY (7.70 ANGSTROMS) OF SPERM FLAGELLAR DOUBLET MICROTUBULES</scope>
    <scope>FUNCTION</scope>
    <scope>SUBCELLULAR LOCATION</scope>
    <scope>SUBUNIT</scope>
</reference>
<reference evidence="10 11" key="8">
    <citation type="journal article" date="2023" name="Cell Discov.">
        <title>In-cell structural insight into the stability of sperm microtubule doublet.</title>
        <authorList>
            <person name="Tai L."/>
            <person name="Yin G."/>
            <person name="Huang X."/>
            <person name="Sun F."/>
            <person name="Zhu Y."/>
        </authorList>
    </citation>
    <scope>STRUCTURE BY ELECTRON MICROSCOPY (4.50 ANGSTROMS)</scope>
    <scope>FUNCTION</scope>
    <scope>SUBUNIT</scope>
    <scope>SUBCELLULAR LOCATION</scope>
</reference>
<sequence length="193" mass="22748">MFKNTFQSGFLSILYSIGSKPLQIWDKKVRNGHIKRITDNDIQSLVLEIEGTNVSTTYITCPADPKKTLGIKLPFLVMIIKNLKKYFTFEVQVLDDKNVRRRFRASNYQSTTRVKPFICTMPMRLDDGWNQIQFNLSDFTRRAYGTNYIETLRVQIHANCRIRRVYFSDRLYSEDELPAEFKLYLPVQNKAKQ</sequence>
<evidence type="ECO:0000250" key="1">
    <source>
        <dbReference type="UniProtKB" id="Q6B857"/>
    </source>
</evidence>
<evidence type="ECO:0000250" key="2">
    <source>
        <dbReference type="UniProtKB" id="Q9Y6A4"/>
    </source>
</evidence>
<evidence type="ECO:0000269" key="3">
    <source>
    </source>
</evidence>
<evidence type="ECO:0000269" key="4">
    <source>
    </source>
</evidence>
<evidence type="ECO:0000269" key="5">
    <source>
    </source>
</evidence>
<evidence type="ECO:0000269" key="6">
    <source>
    </source>
</evidence>
<evidence type="ECO:0000269" key="7">
    <source>
    </source>
</evidence>
<evidence type="ECO:0000303" key="8">
    <source>
    </source>
</evidence>
<evidence type="ECO:0000305" key="9"/>
<evidence type="ECO:0007744" key="10">
    <source>
        <dbReference type="PDB" id="8I7O"/>
    </source>
</evidence>
<evidence type="ECO:0007744" key="11">
    <source>
        <dbReference type="PDB" id="8I7R"/>
    </source>
</evidence>
<evidence type="ECO:0007744" key="12">
    <source>
        <dbReference type="PDB" id="8IYJ"/>
    </source>
</evidence>
<evidence type="ECO:0007744" key="13">
    <source>
        <dbReference type="PDB" id="8TO0"/>
    </source>
</evidence>
<keyword id="KW-0002">3D-structure</keyword>
<keyword id="KW-0025">Alternative splicing</keyword>
<keyword id="KW-0966">Cell projection</keyword>
<keyword id="KW-0969">Cilium</keyword>
<keyword id="KW-0963">Cytoplasm</keyword>
<keyword id="KW-0206">Cytoskeleton</keyword>
<keyword id="KW-0282">Flagellum</keyword>
<keyword id="KW-0493">Microtubule</keyword>
<keyword id="KW-0539">Nucleus</keyword>
<keyword id="KW-1185">Reference proteome</keyword>
<name>CFA20_MOUSE</name>